<protein>
    <recommendedName>
        <fullName evidence="1">Large ribosomal subunit protein bL34</fullName>
    </recommendedName>
    <alternativeName>
        <fullName evidence="3">50S ribosomal protein L34</fullName>
    </alternativeName>
</protein>
<organism>
    <name type="scientific">Yersinia pseudotuberculosis serotype O:1b (strain IP 31758)</name>
    <dbReference type="NCBI Taxonomy" id="349747"/>
    <lineage>
        <taxon>Bacteria</taxon>
        <taxon>Pseudomonadati</taxon>
        <taxon>Pseudomonadota</taxon>
        <taxon>Gammaproteobacteria</taxon>
        <taxon>Enterobacterales</taxon>
        <taxon>Yersiniaceae</taxon>
        <taxon>Yersinia</taxon>
    </lineage>
</organism>
<keyword id="KW-0687">Ribonucleoprotein</keyword>
<keyword id="KW-0689">Ribosomal protein</keyword>
<feature type="chain" id="PRO_1000060768" description="Large ribosomal subunit protein bL34">
    <location>
        <begin position="1"/>
        <end position="46"/>
    </location>
</feature>
<feature type="region of interest" description="Disordered" evidence="2">
    <location>
        <begin position="26"/>
        <end position="46"/>
    </location>
</feature>
<feature type="compositionally biased region" description="Basic residues" evidence="2">
    <location>
        <begin position="31"/>
        <end position="40"/>
    </location>
</feature>
<gene>
    <name evidence="1" type="primary">rpmH</name>
    <name type="ordered locus">YpsIP31758_4154</name>
</gene>
<name>RL34_YERP3</name>
<accession>A7FPB8</accession>
<evidence type="ECO:0000255" key="1">
    <source>
        <dbReference type="HAMAP-Rule" id="MF_00391"/>
    </source>
</evidence>
<evidence type="ECO:0000256" key="2">
    <source>
        <dbReference type="SAM" id="MobiDB-lite"/>
    </source>
</evidence>
<evidence type="ECO:0000305" key="3"/>
<comment type="similarity">
    <text evidence="1">Belongs to the bacterial ribosomal protein bL34 family.</text>
</comment>
<sequence>MKRTFQPSVLKRNRSHGFRARMATKNGRQVLARRRAKSRSRLTVSK</sequence>
<reference key="1">
    <citation type="journal article" date="2007" name="PLoS Genet.">
        <title>The complete genome sequence of Yersinia pseudotuberculosis IP31758, the causative agent of Far East scarlet-like fever.</title>
        <authorList>
            <person name="Eppinger M."/>
            <person name="Rosovitz M.J."/>
            <person name="Fricke W.F."/>
            <person name="Rasko D.A."/>
            <person name="Kokorina G."/>
            <person name="Fayolle C."/>
            <person name="Lindler L.E."/>
            <person name="Carniel E."/>
            <person name="Ravel J."/>
        </authorList>
    </citation>
    <scope>NUCLEOTIDE SEQUENCE [LARGE SCALE GENOMIC DNA]</scope>
    <source>
        <strain>IP 31758</strain>
    </source>
</reference>
<dbReference type="EMBL" id="CP000720">
    <property type="protein sequence ID" value="ABS47486.1"/>
    <property type="molecule type" value="Genomic_DNA"/>
</dbReference>
<dbReference type="RefSeq" id="WP_002220736.1">
    <property type="nucleotide sequence ID" value="NC_009708.1"/>
</dbReference>
<dbReference type="SMR" id="A7FPB8"/>
<dbReference type="GeneID" id="97458397"/>
<dbReference type="KEGG" id="ypi:YpsIP31758_4154"/>
<dbReference type="HOGENOM" id="CLU_129938_2_1_6"/>
<dbReference type="Proteomes" id="UP000002412">
    <property type="component" value="Chromosome"/>
</dbReference>
<dbReference type="GO" id="GO:1990904">
    <property type="term" value="C:ribonucleoprotein complex"/>
    <property type="evidence" value="ECO:0007669"/>
    <property type="project" value="UniProtKB-KW"/>
</dbReference>
<dbReference type="GO" id="GO:0005840">
    <property type="term" value="C:ribosome"/>
    <property type="evidence" value="ECO:0007669"/>
    <property type="project" value="UniProtKB-KW"/>
</dbReference>
<dbReference type="GO" id="GO:0003735">
    <property type="term" value="F:structural constituent of ribosome"/>
    <property type="evidence" value="ECO:0007669"/>
    <property type="project" value="InterPro"/>
</dbReference>
<dbReference type="GO" id="GO:0006412">
    <property type="term" value="P:translation"/>
    <property type="evidence" value="ECO:0007669"/>
    <property type="project" value="UniProtKB-UniRule"/>
</dbReference>
<dbReference type="FunFam" id="1.10.287.3980:FF:000001">
    <property type="entry name" value="Mitochondrial ribosomal protein L34"/>
    <property type="match status" value="1"/>
</dbReference>
<dbReference type="Gene3D" id="1.10.287.3980">
    <property type="match status" value="1"/>
</dbReference>
<dbReference type="HAMAP" id="MF_00391">
    <property type="entry name" value="Ribosomal_bL34"/>
    <property type="match status" value="1"/>
</dbReference>
<dbReference type="InterPro" id="IPR000271">
    <property type="entry name" value="Ribosomal_bL34"/>
</dbReference>
<dbReference type="InterPro" id="IPR020939">
    <property type="entry name" value="Ribosomal_bL34_CS"/>
</dbReference>
<dbReference type="NCBIfam" id="TIGR01030">
    <property type="entry name" value="rpmH_bact"/>
    <property type="match status" value="1"/>
</dbReference>
<dbReference type="PANTHER" id="PTHR14503:SF4">
    <property type="entry name" value="LARGE RIBOSOMAL SUBUNIT PROTEIN BL34M"/>
    <property type="match status" value="1"/>
</dbReference>
<dbReference type="PANTHER" id="PTHR14503">
    <property type="entry name" value="MITOCHONDRIAL RIBOSOMAL PROTEIN 34 FAMILY MEMBER"/>
    <property type="match status" value="1"/>
</dbReference>
<dbReference type="Pfam" id="PF00468">
    <property type="entry name" value="Ribosomal_L34"/>
    <property type="match status" value="1"/>
</dbReference>
<dbReference type="PROSITE" id="PS00784">
    <property type="entry name" value="RIBOSOMAL_L34"/>
    <property type="match status" value="1"/>
</dbReference>
<proteinExistence type="inferred from homology"/>